<accession>Q95046</accession>
<accession>Q27795</accession>
<name>CH60_TRYCR</name>
<comment type="function">
    <text>Implicated in mitochondrial protein import and macromolecular assembly. May facilitate the correct folding of imported proteins. May also prevent misfolding and promote the refolding and proper assembly of unfolded polypeptides generated under stress conditions in the mitochondrial matrix.</text>
</comment>
<comment type="subcellular location">
    <subcellularLocation>
        <location>Mitochondrion matrix</location>
    </subcellularLocation>
</comment>
<comment type="induction">
    <text>By heat shock. There are multiple isoforms that, with increasing temperature, shift in relative abundance from the more basic to the more acidic.</text>
</comment>
<comment type="miscellaneous">
    <text>Exists in at least five isoforms that are not related by a simple post-translational modification and may represent the products of different genes.</text>
</comment>
<comment type="similarity">
    <text evidence="2">Belongs to the chaperonin (HSP60) family.</text>
</comment>
<reference key="1">
    <citation type="journal article" date="1993" name="Mol. Biochem. Parasitol.">
        <title>Predicted amino acid sequence and genomic organization of Trypanosoma cruzi hsp 60 genes.</title>
        <authorList>
            <person name="Giambiagi-De Marval M."/>
            <person name="Gottesdiener K."/>
            <person name="Rondinelli E."/>
            <person name="Van der Ploeg L.H.T."/>
        </authorList>
    </citation>
    <scope>NUCLEOTIDE SEQUENCE [GENOMIC DNA]</scope>
    <source>
        <strain>CL</strain>
    </source>
</reference>
<reference key="2">
    <citation type="journal article" date="1994" name="Mol. Biochem. Parasitol.">
        <title>Expression and localization of Trypanosoma cruzi hsp60.</title>
        <authorList>
            <person name="Sullivan M.A."/>
            <person name="Olson C.L."/>
            <person name="Winquist A.G."/>
            <person name="Engman D.M."/>
        </authorList>
    </citation>
    <scope>NUCLEOTIDE SEQUENCE [MRNA]</scope>
    <source>
        <strain>PBOL</strain>
    </source>
</reference>
<keyword id="KW-0067">ATP-binding</keyword>
<keyword id="KW-0143">Chaperone</keyword>
<keyword id="KW-0496">Mitochondrion</keyword>
<keyword id="KW-0547">Nucleotide-binding</keyword>
<keyword id="KW-0346">Stress response</keyword>
<keyword id="KW-0809">Transit peptide</keyword>
<feature type="transit peptide" description="Mitochondrion" evidence="1">
    <location>
        <begin position="1"/>
        <end position="8"/>
    </location>
</feature>
<feature type="chain" id="PRO_0000005039" description="Chaperonin HSP60, mitochondrial" evidence="1">
    <location>
        <begin position="9"/>
        <end position="562"/>
    </location>
</feature>
<feature type="sequence variant" description="In strain: PBOL.">
    <original>S</original>
    <variation>N</variation>
    <location>
        <position position="142"/>
    </location>
</feature>
<feature type="sequence variant" description="In strain: PBOL.">
    <original>R</original>
    <variation>G</variation>
    <location>
        <position position="249"/>
    </location>
</feature>
<feature type="sequence variant" description="In strain: PBOL.">
    <original>R</original>
    <variation>P</variation>
    <location>
        <position position="457"/>
    </location>
</feature>
<feature type="sequence variant" description="In strain: PBOL.">
    <original>A</original>
    <variation>P</variation>
    <location>
        <position position="521"/>
    </location>
</feature>
<feature type="sequence variant" description="In strain: PBOL.">
    <original>A</original>
    <variation>T</variation>
    <location>
        <position position="531"/>
    </location>
</feature>
<feature type="sequence variant" description="In strain: PBOL.">
    <original>A</original>
    <variation>S</variation>
    <location>
        <position position="534"/>
    </location>
</feature>
<feature type="sequence variant" description="In strain: PBOL.">
    <original>L</original>
    <variation>F</variation>
    <location>
        <position position="538"/>
    </location>
</feature>
<organism>
    <name type="scientific">Trypanosoma cruzi</name>
    <dbReference type="NCBI Taxonomy" id="5693"/>
    <lineage>
        <taxon>Eukaryota</taxon>
        <taxon>Discoba</taxon>
        <taxon>Euglenozoa</taxon>
        <taxon>Kinetoplastea</taxon>
        <taxon>Metakinetoplastina</taxon>
        <taxon>Trypanosomatida</taxon>
        <taxon>Trypanosomatidae</taxon>
        <taxon>Trypanosoma</taxon>
        <taxon>Schizotrypanum</taxon>
    </lineage>
</organism>
<sequence length="562" mass="59411">MFRSAARFAGKEIRFGTEARQSMQKGVQRAVSAVATTLGPKGRNVIIEQSYGAPKITKDGVTVAKAIEFKDPFENMGAQLVRQVCNKTNDLAGDGTTTSAVLVASVFSESLRCIATGTNPIDMKRGMDRAVGVILQSVAEQSRKVTSTENIVQVATISANGDEELGRLIGQAMEKVGKDGVITTQDGKTMTTELEVVEGMSIDRGYISPYFVTDAKAQKAELEDAFVLVSAKKVSSIHTILPALNHVVRTGRPLLIIADDVESEALTTMIFNKLQGKLKIACVKAPGFGDNKTAMMQDIAIFAGARLVGEEGSGLELDAENFDPAILGTVKKATITKDDTVLLNGGGESSMVKERVELLRGLIDGETSDYNREKLQERLAKLSGGVAVIKVGGGSEVEVNEKKDRITDALCSTRAAVQEGIVPGGGVALLRASKALDSLLGDSSLTADQRTGVQIIRNAVRLPAHTIVLNAGKEGAVVVEKVLENNDVTVGYDAQRDRYVNMFEAGIIDPARVVRVAITDAVSVASLMMTAEAAIVDLPKEETPAAGGMGGMGGMGGMGDMY</sequence>
<dbReference type="EMBL" id="X67473">
    <property type="protein sequence ID" value="CAA47819.1"/>
    <property type="molecule type" value="Genomic_DNA"/>
</dbReference>
<dbReference type="EMBL" id="L08791">
    <property type="protein sequence ID" value="AAA30203.1"/>
    <property type="molecule type" value="mRNA"/>
</dbReference>
<dbReference type="PIR" id="S61295">
    <property type="entry name" value="S61295"/>
</dbReference>
<dbReference type="SMR" id="Q95046"/>
<dbReference type="VEuPathDB" id="TriTrypDB:BCY84_22916"/>
<dbReference type="VEuPathDB" id="TriTrypDB:C3747_57g233"/>
<dbReference type="VEuPathDB" id="TriTrypDB:C3747_57g234"/>
<dbReference type="VEuPathDB" id="TriTrypDB:C3747_57g236"/>
<dbReference type="VEuPathDB" id="TriTrypDB:C3747_57g237"/>
<dbReference type="VEuPathDB" id="TriTrypDB:C4B63_48g86"/>
<dbReference type="VEuPathDB" id="TriTrypDB:C4B63_48g87"/>
<dbReference type="VEuPathDB" id="TriTrypDB:C4B63_48g88"/>
<dbReference type="VEuPathDB" id="TriTrypDB:C4B63_48g89"/>
<dbReference type="VEuPathDB" id="TriTrypDB:C4B63_48g90"/>
<dbReference type="VEuPathDB" id="TriTrypDB:C4B63_81g101"/>
<dbReference type="VEuPathDB" id="TriTrypDB:C4B63_81g102"/>
<dbReference type="VEuPathDB" id="TriTrypDB:ECC02_001823"/>
<dbReference type="VEuPathDB" id="TriTrypDB:ECC02_001824"/>
<dbReference type="VEuPathDB" id="TriTrypDB:ECC02_001826"/>
<dbReference type="VEuPathDB" id="TriTrypDB:ECC02_001827"/>
<dbReference type="VEuPathDB" id="TriTrypDB:ECC02_001828"/>
<dbReference type="VEuPathDB" id="TriTrypDB:Tc_MARK_3716"/>
<dbReference type="VEuPathDB" id="TriTrypDB:TcBrA4_0017150"/>
<dbReference type="VEuPathDB" id="TriTrypDB:TcCL_Unassigned03937"/>
<dbReference type="VEuPathDB" id="TriTrypDB:TcCLB.507641.290"/>
<dbReference type="VEuPathDB" id="TriTrypDB:TcCLB.510187.551"/>
<dbReference type="VEuPathDB" id="TriTrypDB:TCDM_02151"/>
<dbReference type="VEuPathDB" id="TriTrypDB:TcG_08163"/>
<dbReference type="VEuPathDB" id="TriTrypDB:TCSYLVIO_004969"/>
<dbReference type="VEuPathDB" id="TriTrypDB:TcYC6_0126180"/>
<dbReference type="OrthoDB" id="244537at2759"/>
<dbReference type="GO" id="GO:0005759">
    <property type="term" value="C:mitochondrial matrix"/>
    <property type="evidence" value="ECO:0007669"/>
    <property type="project" value="UniProtKB-SubCell"/>
</dbReference>
<dbReference type="GO" id="GO:0005524">
    <property type="term" value="F:ATP binding"/>
    <property type="evidence" value="ECO:0007669"/>
    <property type="project" value="UniProtKB-KW"/>
</dbReference>
<dbReference type="GO" id="GO:0140662">
    <property type="term" value="F:ATP-dependent protein folding chaperone"/>
    <property type="evidence" value="ECO:0007669"/>
    <property type="project" value="InterPro"/>
</dbReference>
<dbReference type="GO" id="GO:0042026">
    <property type="term" value="P:protein refolding"/>
    <property type="evidence" value="ECO:0007669"/>
    <property type="project" value="InterPro"/>
</dbReference>
<dbReference type="CDD" id="cd03344">
    <property type="entry name" value="GroEL"/>
    <property type="match status" value="1"/>
</dbReference>
<dbReference type="FunFam" id="3.50.7.10:FF:000001">
    <property type="entry name" value="60 kDa chaperonin"/>
    <property type="match status" value="1"/>
</dbReference>
<dbReference type="Gene3D" id="3.50.7.10">
    <property type="entry name" value="GroEL"/>
    <property type="match status" value="1"/>
</dbReference>
<dbReference type="Gene3D" id="1.10.560.10">
    <property type="entry name" value="GroEL-like equatorial domain"/>
    <property type="match status" value="1"/>
</dbReference>
<dbReference type="Gene3D" id="3.30.260.10">
    <property type="entry name" value="TCP-1-like chaperonin intermediate domain"/>
    <property type="match status" value="1"/>
</dbReference>
<dbReference type="HAMAP" id="MF_00600">
    <property type="entry name" value="CH60"/>
    <property type="match status" value="1"/>
</dbReference>
<dbReference type="InterPro" id="IPR018370">
    <property type="entry name" value="Chaperonin_Cpn60_CS"/>
</dbReference>
<dbReference type="InterPro" id="IPR001844">
    <property type="entry name" value="Cpn60/GroEL"/>
</dbReference>
<dbReference type="InterPro" id="IPR002423">
    <property type="entry name" value="Cpn60/GroEL/TCP-1"/>
</dbReference>
<dbReference type="InterPro" id="IPR027409">
    <property type="entry name" value="GroEL-like_apical_dom_sf"/>
</dbReference>
<dbReference type="InterPro" id="IPR027413">
    <property type="entry name" value="GROEL-like_equatorial_sf"/>
</dbReference>
<dbReference type="InterPro" id="IPR027410">
    <property type="entry name" value="TCP-1-like_intermed_sf"/>
</dbReference>
<dbReference type="NCBIfam" id="TIGR02348">
    <property type="entry name" value="GroEL"/>
    <property type="match status" value="1"/>
</dbReference>
<dbReference type="NCBIfam" id="NF000592">
    <property type="entry name" value="PRK00013.1"/>
    <property type="match status" value="1"/>
</dbReference>
<dbReference type="NCBIfam" id="NF009487">
    <property type="entry name" value="PRK12849.1"/>
    <property type="match status" value="1"/>
</dbReference>
<dbReference type="NCBIfam" id="NF009488">
    <property type="entry name" value="PRK12850.1"/>
    <property type="match status" value="1"/>
</dbReference>
<dbReference type="NCBIfam" id="NF009489">
    <property type="entry name" value="PRK12851.1"/>
    <property type="match status" value="1"/>
</dbReference>
<dbReference type="PANTHER" id="PTHR45633">
    <property type="entry name" value="60 KDA HEAT SHOCK PROTEIN, MITOCHONDRIAL"/>
    <property type="match status" value="1"/>
</dbReference>
<dbReference type="Pfam" id="PF00118">
    <property type="entry name" value="Cpn60_TCP1"/>
    <property type="match status" value="1"/>
</dbReference>
<dbReference type="PRINTS" id="PR00298">
    <property type="entry name" value="CHAPERONIN60"/>
</dbReference>
<dbReference type="SUPFAM" id="SSF52029">
    <property type="entry name" value="GroEL apical domain-like"/>
    <property type="match status" value="1"/>
</dbReference>
<dbReference type="SUPFAM" id="SSF48592">
    <property type="entry name" value="GroEL equatorial domain-like"/>
    <property type="match status" value="1"/>
</dbReference>
<dbReference type="SUPFAM" id="SSF54849">
    <property type="entry name" value="GroEL-intermediate domain like"/>
    <property type="match status" value="1"/>
</dbReference>
<dbReference type="PROSITE" id="PS00296">
    <property type="entry name" value="CHAPERONINS_CPN60"/>
    <property type="match status" value="1"/>
</dbReference>
<evidence type="ECO:0000250" key="1"/>
<evidence type="ECO:0000305" key="2"/>
<protein>
    <recommendedName>
        <fullName>Chaperonin HSP60, mitochondrial</fullName>
        <shortName>Protein Cpn60</shortName>
    </recommendedName>
    <alternativeName>
        <fullName>Heat shock protein 60</fullName>
    </alternativeName>
    <alternativeName>
        <fullName>groEL protein</fullName>
    </alternativeName>
</protein>
<gene>
    <name type="primary">HSP60</name>
</gene>
<proteinExistence type="evidence at transcript level"/>